<proteinExistence type="inferred from homology"/>
<keyword id="KW-0150">Chloroplast</keyword>
<keyword id="KW-0240">DNA-directed RNA polymerase</keyword>
<keyword id="KW-0548">Nucleotidyltransferase</keyword>
<keyword id="KW-0934">Plastid</keyword>
<keyword id="KW-0804">Transcription</keyword>
<keyword id="KW-0808">Transferase</keyword>
<organism>
    <name type="scientific">Aegilops speltoides</name>
    <name type="common">Goatgrass</name>
    <name type="synonym">Triticum speltoides</name>
    <dbReference type="NCBI Taxonomy" id="4573"/>
    <lineage>
        <taxon>Eukaryota</taxon>
        <taxon>Viridiplantae</taxon>
        <taxon>Streptophyta</taxon>
        <taxon>Embryophyta</taxon>
        <taxon>Tracheophyta</taxon>
        <taxon>Spermatophyta</taxon>
        <taxon>Magnoliopsida</taxon>
        <taxon>Liliopsida</taxon>
        <taxon>Poales</taxon>
        <taxon>Poaceae</taxon>
        <taxon>BOP clade</taxon>
        <taxon>Pooideae</taxon>
        <taxon>Triticodae</taxon>
        <taxon>Triticeae</taxon>
        <taxon>Triticinae</taxon>
        <taxon>Aegilops</taxon>
    </lineage>
</organism>
<protein>
    <recommendedName>
        <fullName evidence="1">DNA-directed RNA polymerase subunit alpha</fullName>
        <shortName evidence="1">PEP</shortName>
        <ecNumber evidence="1">2.7.7.6</ecNumber>
    </recommendedName>
    <alternativeName>
        <fullName evidence="1">Plastid-encoded RNA polymerase subunit alpha</fullName>
        <shortName evidence="1">RNA polymerase subunit alpha</shortName>
    </alternativeName>
</protein>
<name>RPOA_AEGSP</name>
<accession>P92892</accession>
<accession>P94051</accession>
<gene>
    <name evidence="1" type="primary">rpoA</name>
</gene>
<comment type="function">
    <text evidence="1">DNA-dependent RNA polymerase catalyzes the transcription of DNA into RNA using the four ribonucleoside triphosphates as substrates.</text>
</comment>
<comment type="catalytic activity">
    <reaction evidence="1">
        <text>RNA(n) + a ribonucleoside 5'-triphosphate = RNA(n+1) + diphosphate</text>
        <dbReference type="Rhea" id="RHEA:21248"/>
        <dbReference type="Rhea" id="RHEA-COMP:14527"/>
        <dbReference type="Rhea" id="RHEA-COMP:17342"/>
        <dbReference type="ChEBI" id="CHEBI:33019"/>
        <dbReference type="ChEBI" id="CHEBI:61557"/>
        <dbReference type="ChEBI" id="CHEBI:140395"/>
        <dbReference type="EC" id="2.7.7.6"/>
    </reaction>
</comment>
<comment type="subunit">
    <text evidence="1">In plastids the minimal PEP RNA polymerase catalytic core is composed of four subunits: alpha, beta, beta', and beta''. When a (nuclear-encoded) sigma factor is associated with the core the holoenzyme is formed, which can initiate transcription.</text>
</comment>
<comment type="subcellular location">
    <subcellularLocation>
        <location>Plastid</location>
        <location>Chloroplast</location>
    </subcellularLocation>
</comment>
<comment type="domain">
    <text evidence="1">The N-terminal domain is essential for RNAP assembly and basal transcription, whereas the C-terminal domain is involved in interaction with transcriptional regulators and with upstream promoter elements.</text>
</comment>
<comment type="similarity">
    <text evidence="1">Belongs to the RNA polymerase alpha chain family.</text>
</comment>
<reference key="1">
    <citation type="journal article" date="2002" name="Genome">
        <title>Phylogenetic analysis of North American Elymus and the monogenomic Triticeae (Poaceae) using three chloroplast DNA data sets.</title>
        <authorList>
            <person name="Mason-Gamer R.J."/>
            <person name="Orme N.L."/>
            <person name="Anderson C.M."/>
        </authorList>
    </citation>
    <scope>NUCLEOTIDE SEQUENCE [GENOMIC DNA]</scope>
</reference>
<reference key="2">
    <citation type="journal article" date="1997" name="Mol. Phylogenet. Evol.">
        <title>Phylogenetic analysis of the Triticeae (Poaceae) based on rpoA sequence data.</title>
        <authorList>
            <person name="Petersen G."/>
            <person name="Seberg O."/>
        </authorList>
    </citation>
    <scope>NUCLEOTIDE SEQUENCE [GENOMIC DNA]</scope>
    <source>
        <tissue>Leaf</tissue>
    </source>
</reference>
<sequence>MVREEVAGSTQTLQWKCVESRVDSKRLYYGRFILSPLRKGQADTVGIALRRALLGEIEGTCITRAKFGSVPHEYSTIAGIEESVQEILLNLKEIVLRSNLYGVRDASICVKGPRYITAQDIILPPSVEIVDTAQPIANLTEPIDFCIDLQIKRDRGYQTELRKNYQDGSYPIDAVSMPVRNVNYSIFSCGNGNEKHEILFLEIWTNGSLTPKEALYEASRNLIDLFLPFLHAEEEGASFEENKNRFTPPLFTFQKRLTNLKKNKKGIPLNCIFIDQLELTSRTYNCLKRANIHTLLDLLSKTEEDLLRIDSFRMEDRKHIWDTLEKHLPIDLLKNKLSF</sequence>
<dbReference type="EC" id="2.7.7.6" evidence="1"/>
<dbReference type="EMBL" id="AY115909">
    <property type="protein sequence ID" value="AAM97418.1"/>
    <property type="molecule type" value="Genomic_DNA"/>
</dbReference>
<dbReference type="EMBL" id="Z77766">
    <property type="protein sequence ID" value="CAB01375.1"/>
    <property type="molecule type" value="Genomic_DNA"/>
</dbReference>
<dbReference type="RefSeq" id="YP_008474422.1">
    <property type="nucleotide sequence ID" value="NC_022135.1"/>
</dbReference>
<dbReference type="SMR" id="P92892"/>
<dbReference type="GeneID" id="65348745"/>
<dbReference type="GO" id="GO:0009507">
    <property type="term" value="C:chloroplast"/>
    <property type="evidence" value="ECO:0007669"/>
    <property type="project" value="UniProtKB-SubCell"/>
</dbReference>
<dbReference type="GO" id="GO:0000428">
    <property type="term" value="C:DNA-directed RNA polymerase complex"/>
    <property type="evidence" value="ECO:0007669"/>
    <property type="project" value="UniProtKB-KW"/>
</dbReference>
<dbReference type="GO" id="GO:0005739">
    <property type="term" value="C:mitochondrion"/>
    <property type="evidence" value="ECO:0007669"/>
    <property type="project" value="GOC"/>
</dbReference>
<dbReference type="GO" id="GO:0003677">
    <property type="term" value="F:DNA binding"/>
    <property type="evidence" value="ECO:0007669"/>
    <property type="project" value="UniProtKB-UniRule"/>
</dbReference>
<dbReference type="GO" id="GO:0003899">
    <property type="term" value="F:DNA-directed RNA polymerase activity"/>
    <property type="evidence" value="ECO:0007669"/>
    <property type="project" value="UniProtKB-UniRule"/>
</dbReference>
<dbReference type="GO" id="GO:0046983">
    <property type="term" value="F:protein dimerization activity"/>
    <property type="evidence" value="ECO:0007669"/>
    <property type="project" value="InterPro"/>
</dbReference>
<dbReference type="GO" id="GO:0006351">
    <property type="term" value="P:DNA-templated transcription"/>
    <property type="evidence" value="ECO:0007669"/>
    <property type="project" value="UniProtKB-UniRule"/>
</dbReference>
<dbReference type="CDD" id="cd06928">
    <property type="entry name" value="RNAP_alpha_NTD"/>
    <property type="match status" value="1"/>
</dbReference>
<dbReference type="FunFam" id="2.170.120.12:FF:000001">
    <property type="entry name" value="DNA-directed RNA polymerase subunit alpha"/>
    <property type="match status" value="1"/>
</dbReference>
<dbReference type="Gene3D" id="1.10.150.20">
    <property type="entry name" value="5' to 3' exonuclease, C-terminal subdomain"/>
    <property type="match status" value="1"/>
</dbReference>
<dbReference type="Gene3D" id="2.170.120.12">
    <property type="entry name" value="DNA-directed RNA polymerase, insert domain"/>
    <property type="match status" value="1"/>
</dbReference>
<dbReference type="Gene3D" id="3.30.1360.10">
    <property type="entry name" value="RNA polymerase, RBP11-like subunit"/>
    <property type="match status" value="1"/>
</dbReference>
<dbReference type="HAMAP" id="MF_00059">
    <property type="entry name" value="RNApol_bact_RpoA"/>
    <property type="match status" value="1"/>
</dbReference>
<dbReference type="InterPro" id="IPR011262">
    <property type="entry name" value="DNA-dir_RNA_pol_insert"/>
</dbReference>
<dbReference type="InterPro" id="IPR011263">
    <property type="entry name" value="DNA-dir_RNA_pol_RpoA/D/Rpb3"/>
</dbReference>
<dbReference type="InterPro" id="IPR011773">
    <property type="entry name" value="DNA-dir_RpoA"/>
</dbReference>
<dbReference type="InterPro" id="IPR036603">
    <property type="entry name" value="RBP11-like"/>
</dbReference>
<dbReference type="InterPro" id="IPR011260">
    <property type="entry name" value="RNAP_asu_C"/>
</dbReference>
<dbReference type="InterPro" id="IPR036643">
    <property type="entry name" value="RNApol_insert_sf"/>
</dbReference>
<dbReference type="NCBIfam" id="TIGR02027">
    <property type="entry name" value="rpoA"/>
    <property type="match status" value="1"/>
</dbReference>
<dbReference type="Pfam" id="PF01000">
    <property type="entry name" value="RNA_pol_A_bac"/>
    <property type="match status" value="1"/>
</dbReference>
<dbReference type="Pfam" id="PF03118">
    <property type="entry name" value="RNA_pol_A_CTD"/>
    <property type="match status" value="1"/>
</dbReference>
<dbReference type="Pfam" id="PF01193">
    <property type="entry name" value="RNA_pol_L"/>
    <property type="match status" value="1"/>
</dbReference>
<dbReference type="SMART" id="SM00662">
    <property type="entry name" value="RPOLD"/>
    <property type="match status" value="1"/>
</dbReference>
<dbReference type="SUPFAM" id="SSF47789">
    <property type="entry name" value="C-terminal domain of RNA polymerase alpha subunit"/>
    <property type="match status" value="1"/>
</dbReference>
<dbReference type="SUPFAM" id="SSF56553">
    <property type="entry name" value="Insert subdomain of RNA polymerase alpha subunit"/>
    <property type="match status" value="1"/>
</dbReference>
<dbReference type="SUPFAM" id="SSF55257">
    <property type="entry name" value="RBP11-like subunits of RNA polymerase"/>
    <property type="match status" value="1"/>
</dbReference>
<evidence type="ECO:0000255" key="1">
    <source>
        <dbReference type="HAMAP-Rule" id="MF_00059"/>
    </source>
</evidence>
<geneLocation type="chloroplast"/>
<feature type="chain" id="PRO_0000175434" description="DNA-directed RNA polymerase subunit alpha">
    <location>
        <begin position="1"/>
        <end position="339"/>
    </location>
</feature>
<feature type="region of interest" description="Alpha N-terminal domain (alpha-NTD)" evidence="1">
    <location>
        <begin position="1"/>
        <end position="233"/>
    </location>
</feature>
<feature type="region of interest" description="Alpha C-terminal domain (alpha-CTD)" evidence="1">
    <location>
        <begin position="266"/>
        <end position="339"/>
    </location>
</feature>